<dbReference type="EC" id="4.3.1.3" evidence="1"/>
<dbReference type="EMBL" id="CP000494">
    <property type="protein sequence ID" value="ABQ38361.1"/>
    <property type="molecule type" value="Genomic_DNA"/>
</dbReference>
<dbReference type="RefSeq" id="WP_012046302.1">
    <property type="nucleotide sequence ID" value="NC_009485.1"/>
</dbReference>
<dbReference type="SMR" id="A5EQB7"/>
<dbReference type="STRING" id="288000.BBta_6451"/>
<dbReference type="KEGG" id="bbt:BBta_6451"/>
<dbReference type="eggNOG" id="COG2986">
    <property type="taxonomic scope" value="Bacteria"/>
</dbReference>
<dbReference type="HOGENOM" id="CLU_014801_4_0_5"/>
<dbReference type="OrthoDB" id="9806955at2"/>
<dbReference type="UniPathway" id="UPA00379">
    <property type="reaction ID" value="UER00549"/>
</dbReference>
<dbReference type="Proteomes" id="UP000000246">
    <property type="component" value="Chromosome"/>
</dbReference>
<dbReference type="GO" id="GO:0005737">
    <property type="term" value="C:cytoplasm"/>
    <property type="evidence" value="ECO:0007669"/>
    <property type="project" value="UniProtKB-SubCell"/>
</dbReference>
<dbReference type="GO" id="GO:0004397">
    <property type="term" value="F:histidine ammonia-lyase activity"/>
    <property type="evidence" value="ECO:0007669"/>
    <property type="project" value="UniProtKB-UniRule"/>
</dbReference>
<dbReference type="GO" id="GO:0019556">
    <property type="term" value="P:L-histidine catabolic process to glutamate and formamide"/>
    <property type="evidence" value="ECO:0007669"/>
    <property type="project" value="UniProtKB-UniPathway"/>
</dbReference>
<dbReference type="GO" id="GO:0019557">
    <property type="term" value="P:L-histidine catabolic process to glutamate and formate"/>
    <property type="evidence" value="ECO:0007669"/>
    <property type="project" value="UniProtKB-UniPathway"/>
</dbReference>
<dbReference type="CDD" id="cd00332">
    <property type="entry name" value="PAL-HAL"/>
    <property type="match status" value="1"/>
</dbReference>
<dbReference type="FunFam" id="1.10.275.10:FF:000005">
    <property type="entry name" value="Histidine ammonia-lyase"/>
    <property type="match status" value="1"/>
</dbReference>
<dbReference type="FunFam" id="1.20.200.10:FF:000003">
    <property type="entry name" value="Histidine ammonia-lyase"/>
    <property type="match status" value="1"/>
</dbReference>
<dbReference type="Gene3D" id="1.20.200.10">
    <property type="entry name" value="Fumarase/aspartase (Central domain)"/>
    <property type="match status" value="1"/>
</dbReference>
<dbReference type="Gene3D" id="1.10.275.10">
    <property type="entry name" value="Fumarase/aspartase (N-terminal domain)"/>
    <property type="match status" value="1"/>
</dbReference>
<dbReference type="HAMAP" id="MF_00229">
    <property type="entry name" value="His_ammonia_lyase"/>
    <property type="match status" value="1"/>
</dbReference>
<dbReference type="InterPro" id="IPR001106">
    <property type="entry name" value="Aromatic_Lyase"/>
</dbReference>
<dbReference type="InterPro" id="IPR024083">
    <property type="entry name" value="Fumarase/histidase_N"/>
</dbReference>
<dbReference type="InterPro" id="IPR005921">
    <property type="entry name" value="HutH"/>
</dbReference>
<dbReference type="InterPro" id="IPR008948">
    <property type="entry name" value="L-Aspartase-like"/>
</dbReference>
<dbReference type="InterPro" id="IPR022313">
    <property type="entry name" value="Phe/His_NH3-lyase_AS"/>
</dbReference>
<dbReference type="NCBIfam" id="TIGR01225">
    <property type="entry name" value="hutH"/>
    <property type="match status" value="1"/>
</dbReference>
<dbReference type="NCBIfam" id="NF006871">
    <property type="entry name" value="PRK09367.1"/>
    <property type="match status" value="1"/>
</dbReference>
<dbReference type="PANTHER" id="PTHR10362">
    <property type="entry name" value="HISTIDINE AMMONIA-LYASE"/>
    <property type="match status" value="1"/>
</dbReference>
<dbReference type="Pfam" id="PF00221">
    <property type="entry name" value="Lyase_aromatic"/>
    <property type="match status" value="1"/>
</dbReference>
<dbReference type="SUPFAM" id="SSF48557">
    <property type="entry name" value="L-aspartase-like"/>
    <property type="match status" value="1"/>
</dbReference>
<dbReference type="PROSITE" id="PS00488">
    <property type="entry name" value="PAL_HISTIDASE"/>
    <property type="match status" value="1"/>
</dbReference>
<gene>
    <name evidence="1" type="primary">hutH</name>
    <name type="ordered locus">BBta_6451</name>
</gene>
<organism>
    <name type="scientific">Bradyrhizobium sp. (strain BTAi1 / ATCC BAA-1182)</name>
    <dbReference type="NCBI Taxonomy" id="288000"/>
    <lineage>
        <taxon>Bacteria</taxon>
        <taxon>Pseudomonadati</taxon>
        <taxon>Pseudomonadota</taxon>
        <taxon>Alphaproteobacteria</taxon>
        <taxon>Hyphomicrobiales</taxon>
        <taxon>Nitrobacteraceae</taxon>
        <taxon>Bradyrhizobium</taxon>
    </lineage>
</organism>
<keyword id="KW-0963">Cytoplasm</keyword>
<keyword id="KW-0369">Histidine metabolism</keyword>
<keyword id="KW-0456">Lyase</keyword>
<keyword id="KW-1185">Reference proteome</keyword>
<proteinExistence type="inferred from homology"/>
<feature type="chain" id="PRO_1000021543" description="Histidine ammonia-lyase">
    <location>
        <begin position="1"/>
        <end position="515"/>
    </location>
</feature>
<feature type="modified residue" description="2,3-didehydroalanine (Ser)" evidence="1">
    <location>
        <position position="143"/>
    </location>
</feature>
<feature type="cross-link" description="5-imidazolinone (Ala-Gly)" evidence="1">
    <location>
        <begin position="142"/>
        <end position="144"/>
    </location>
</feature>
<protein>
    <recommendedName>
        <fullName evidence="1">Histidine ammonia-lyase</fullName>
        <shortName evidence="1">Histidase</shortName>
        <ecNumber evidence="1">4.3.1.3</ecNumber>
    </recommendedName>
</protein>
<name>HUTH_BRASB</name>
<reference key="1">
    <citation type="journal article" date="2007" name="Science">
        <title>Legumes symbioses: absence of nod genes in photosynthetic bradyrhizobia.</title>
        <authorList>
            <person name="Giraud E."/>
            <person name="Moulin L."/>
            <person name="Vallenet D."/>
            <person name="Barbe V."/>
            <person name="Cytryn E."/>
            <person name="Avarre J.-C."/>
            <person name="Jaubert M."/>
            <person name="Simon D."/>
            <person name="Cartieaux F."/>
            <person name="Prin Y."/>
            <person name="Bena G."/>
            <person name="Hannibal L."/>
            <person name="Fardoux J."/>
            <person name="Kojadinovic M."/>
            <person name="Vuillet L."/>
            <person name="Lajus A."/>
            <person name="Cruveiller S."/>
            <person name="Rouy Z."/>
            <person name="Mangenot S."/>
            <person name="Segurens B."/>
            <person name="Dossat C."/>
            <person name="Franck W.L."/>
            <person name="Chang W.-S."/>
            <person name="Saunders E."/>
            <person name="Bruce D."/>
            <person name="Richardson P."/>
            <person name="Normand P."/>
            <person name="Dreyfus B."/>
            <person name="Pignol D."/>
            <person name="Stacey G."/>
            <person name="Emerich D."/>
            <person name="Vermeglio A."/>
            <person name="Medigue C."/>
            <person name="Sadowsky M."/>
        </authorList>
    </citation>
    <scope>NUCLEOTIDE SEQUENCE [LARGE SCALE GENOMIC DNA]</scope>
    <source>
        <strain>BTAi1 / ATCC BAA-1182</strain>
    </source>
</reference>
<accession>A5EQB7</accession>
<sequence>MSTIIAAPGRVSLDDLARVYAGATLELDPSYWPDVEAAAAIVAKAAQGAEPVYGINTGFGKLASKRIPPDQTAQLQRNLILSHCCGVGPVTPEAVVRLMMALKIISLGRGASGVRREIIEQLQAMLARGVCPFVPQQGSVGASGDLAPLAHMTAVMIGEGQAFVDGRLVPGREALAHAGLAPVTLGPKEGLALINGTQFSTAYALAGLLRAHDLLKAALVTGALSVDAAMASTAPFRPEIQALRGHPGQIAAGRVLTELLDGSAIRLSHLEGDERVQDPYCLRCQPQVAGAALDLLTQTARTLVTEANAVTDNPLVLVVTGEIISGGNFHAEPVAFAADQIALALSELGAISERRIATLVDPALNFGLPPFLTPQPGLNSGFMIAEVTAAALFAENKQRALPCSIDSTPTSANQEDHVSMAAHAARRLHDMADNLAHIIGIELLVAAQGIELRVPHGTSAALSAVIGALRVHVPALENDRYMADDLAKAAAIVAGGVLADAARDALGRDPFPKLG</sequence>
<comment type="catalytic activity">
    <reaction evidence="1">
        <text>L-histidine = trans-urocanate + NH4(+)</text>
        <dbReference type="Rhea" id="RHEA:21232"/>
        <dbReference type="ChEBI" id="CHEBI:17771"/>
        <dbReference type="ChEBI" id="CHEBI:28938"/>
        <dbReference type="ChEBI" id="CHEBI:57595"/>
        <dbReference type="EC" id="4.3.1.3"/>
    </reaction>
</comment>
<comment type="pathway">
    <text evidence="1">Amino-acid degradation; L-histidine degradation into L-glutamate; N-formimidoyl-L-glutamate from L-histidine: step 1/3.</text>
</comment>
<comment type="subcellular location">
    <subcellularLocation>
        <location evidence="1">Cytoplasm</location>
    </subcellularLocation>
</comment>
<comment type="PTM">
    <text evidence="1">Contains an active site 4-methylidene-imidazol-5-one (MIO), which is formed autocatalytically by cyclization and dehydration of residues Ala-Ser-Gly.</text>
</comment>
<comment type="similarity">
    <text evidence="1">Belongs to the PAL/histidase family.</text>
</comment>
<evidence type="ECO:0000255" key="1">
    <source>
        <dbReference type="HAMAP-Rule" id="MF_00229"/>
    </source>
</evidence>